<proteinExistence type="evidence at protein level"/>
<name>PROT_UNKP</name>
<feature type="chain" id="PRO_0000455580" description="Roc-COR-CHAT protease">
    <location>
        <begin position="1"/>
        <end position="1062"/>
    </location>
</feature>
<feature type="repeat" description="LRR 1" evidence="2">
    <location>
        <begin position="70"/>
        <end position="94"/>
    </location>
</feature>
<feature type="repeat" description="LRR 2" evidence="6">
    <location>
        <begin position="95"/>
        <end position="116"/>
    </location>
</feature>
<feature type="repeat" description="LRR 3" evidence="2">
    <location>
        <begin position="115"/>
        <end position="141"/>
    </location>
</feature>
<feature type="repeat" description="LRR 4" evidence="6">
    <location>
        <begin position="142"/>
        <end position="159"/>
    </location>
</feature>
<feature type="repeat" description="LRR 5" evidence="6">
    <location>
        <begin position="160"/>
        <end position="180"/>
    </location>
</feature>
<feature type="repeat" description="LRR 6" evidence="2">
    <location>
        <begin position="181"/>
        <end position="203"/>
    </location>
</feature>
<feature type="repeat" description="LRR 7" evidence="2">
    <location>
        <begin position="204"/>
        <end position="226"/>
    </location>
</feature>
<feature type="repeat" description="LRR 8" evidence="2">
    <location>
        <begin position="228"/>
        <end position="249"/>
    </location>
</feature>
<feature type="domain" description="COR" evidence="2">
    <location>
        <begin position="470"/>
        <end position="660"/>
    </location>
</feature>
<feature type="region of interest" description="Disordered" evidence="3">
    <location>
        <begin position="836"/>
        <end position="856"/>
    </location>
</feature>
<feature type="active site" evidence="1">
    <location>
        <position position="931"/>
    </location>
</feature>
<feature type="active site" evidence="1">
    <location>
        <position position="980"/>
    </location>
</feature>
<organism>
    <name type="scientific">Unknown prokaryotic organism</name>
    <dbReference type="NCBI Taxonomy" id="2725"/>
    <lineage>
        <taxon>Bacteria</taxon>
        <taxon>environmental samples</taxon>
    </lineage>
</organism>
<evidence type="ECO:0000250" key="1">
    <source>
        <dbReference type="UniProtKB" id="P0DV49"/>
    </source>
</evidence>
<evidence type="ECO:0000255" key="2"/>
<evidence type="ECO:0000256" key="3">
    <source>
        <dbReference type="SAM" id="MobiDB-lite"/>
    </source>
</evidence>
<evidence type="ECO:0000269" key="4">
    <source>
    </source>
</evidence>
<evidence type="ECO:0000303" key="5">
    <source>
    </source>
</evidence>
<evidence type="ECO:0000305" key="6"/>
<evidence type="ECO:0000305" key="7">
    <source>
    </source>
</evidence>
<accession>P0DV53</accession>
<protein>
    <recommendedName>
        <fullName evidence="5">Roc-COR-CHAT protease</fullName>
        <ecNumber evidence="7">3.4.21.-</ecNumber>
    </recommendedName>
    <alternativeName>
        <fullName evidence="6">Protease Ga0307981_100051430</fullName>
    </alternativeName>
</protein>
<comment type="function">
    <text evidence="4">A dedicated protease for substrate gasdermin bGSDM; cleaves the bGSDM precursor, releasing the pore-forming moiety, which integrates into the membrane and triggers cell death. Probably involved in defense against bacteriophages. Expression of bGSDM and this neighboring protease is highly toxic in E.coli.</text>
</comment>
<comment type="biophysicochemical properties">
    <phDependence>
        <text evidence="4">Active between pH 6.0 and 10.2.</text>
    </phDependence>
</comment>
<comment type="miscellaneous">
    <text evidence="5">Might be a Bacteriodetes scaffold.</text>
</comment>
<sequence>MPQPAIIAKLEQQLRITIAPFDAPDLKAFMRYGRKGDDNSQYFLKDGKLTGLKLRTLGLKDTSFLEERELAGLQGLYLAENDFSSLQLPGHLQQLRLLHLADNKELKTLEFAGSMPLLEEIDLSDSGIQTLQLPACPALQKLDVSRSKLEAFSFASACPALWWLDLSGNGELRKLKMPAGFKALQYLYLYKSGIQELQINGKLPKLVVLDLEGNQLKQWPEKLLLPEGLETLYLEGNPIENIPETIRGSGERHNSVEDVRQYLLSIIDEDKVEYLHQAKMILVGNGEVGKTSIRLKLLDSKATLPKKKDRTQGLDIVPYELKALSPDLTGLEDAIDFQLNIWDFGGQGKYREVQQLFFSPQSLYLFVTACDDTPEDKESYVTFDYWMSLVHALSYDREQERSSPVIHVVNKIDKERMDIDQTAHNRFGNVEEFHAISCKHLTNFEALRKAIPRVLPKVGQGIFRDQYNEDWLGVMEELQRRQGEHHITYQEYRDEVCKDRLNDGEARAWLRILDRIGTVIYFGENEKLKDWIILNPNWVKQAVFEVIDSGERNPVPQWRFEKQIWSHYSEKEREKLFELLQAYDLAYKQQNAFGEQEFVVPALLEHESPNYQDLLPQEELPLKLRFAFKPILPAGTVNKLMVRLKDYIYRGLMWKDNVVFHHPDSNAYVQVEEDWQEHFIYLSVYGKQPSVIYETVTSTLKDINNDFKNAKFLKELEFTVEGFDGEEWMKKRLLKKAGADFFNFLWEKPGIHYKEEDEKNIMDQVKELIAKNRVGDALEMLKSLVPAHLEAEVLQLISRYSKLQRDSRMGILANNDENVERNRIVSSILNLASEAERDNDHTGLSDSSDQEDETFTNVTDQTKKILFICSSPSGKNLLDFGKEFKSIGIARQLADSRDDYAEPIIKTSVEADDLLHIMTKYQPDILHISLHSSKSKGLYFENNAGQAEPISAEDFKDIIETYASDPDGKGRIETIVLSCCDSEAYGRAITNFADHIVVTKDLFPDKAAVVYAKDFYRMLFNNKDIGFAHRSATSAIKRKKYPSDGFAHPIHEIPFLIKNDDK</sequence>
<keyword id="KW-0051">Antiviral defense</keyword>
<keyword id="KW-0378">Hydrolase</keyword>
<keyword id="KW-0433">Leucine-rich repeat</keyword>
<keyword id="KW-0645">Protease</keyword>
<keyword id="KW-0677">Repeat</keyword>
<keyword id="KW-0720">Serine protease</keyword>
<dbReference type="EC" id="3.4.21.-" evidence="7"/>
<dbReference type="SMR" id="P0DV53"/>
<dbReference type="GO" id="GO:0008236">
    <property type="term" value="F:serine-type peptidase activity"/>
    <property type="evidence" value="ECO:0007669"/>
    <property type="project" value="UniProtKB-KW"/>
</dbReference>
<dbReference type="GO" id="GO:0051607">
    <property type="term" value="P:defense response to virus"/>
    <property type="evidence" value="ECO:0007669"/>
    <property type="project" value="UniProtKB-KW"/>
</dbReference>
<dbReference type="GO" id="GO:0006508">
    <property type="term" value="P:proteolysis"/>
    <property type="evidence" value="ECO:0007669"/>
    <property type="project" value="UniProtKB-KW"/>
</dbReference>
<dbReference type="Gene3D" id="3.30.310.200">
    <property type="match status" value="1"/>
</dbReference>
<dbReference type="Gene3D" id="3.40.50.300">
    <property type="entry name" value="P-loop containing nucleotide triphosphate hydrolases"/>
    <property type="match status" value="1"/>
</dbReference>
<dbReference type="Gene3D" id="3.80.10.10">
    <property type="entry name" value="Ribonuclease Inhibitor"/>
    <property type="match status" value="1"/>
</dbReference>
<dbReference type="Gene3D" id="1.10.10.10">
    <property type="entry name" value="Winged helix-like DNA-binding domain superfamily/Winged helix DNA-binding domain"/>
    <property type="match status" value="1"/>
</dbReference>
<dbReference type="InterPro" id="IPR032171">
    <property type="entry name" value="COR-A"/>
</dbReference>
<dbReference type="InterPro" id="IPR045439">
    <property type="entry name" value="EAD11"/>
</dbReference>
<dbReference type="InterPro" id="IPR001611">
    <property type="entry name" value="Leu-rich_rpt"/>
</dbReference>
<dbReference type="InterPro" id="IPR003591">
    <property type="entry name" value="Leu-rich_rpt_typical-subtyp"/>
</dbReference>
<dbReference type="InterPro" id="IPR032675">
    <property type="entry name" value="LRR_dom_sf"/>
</dbReference>
<dbReference type="InterPro" id="IPR027417">
    <property type="entry name" value="P-loop_NTPase"/>
</dbReference>
<dbReference type="InterPro" id="IPR036388">
    <property type="entry name" value="WH-like_DNA-bd_sf"/>
</dbReference>
<dbReference type="PANTHER" id="PTHR47679:SF2">
    <property type="entry name" value="C-TERMINAL OF ROC (COR) DOMAIN-CONTAINING PROTEIN"/>
    <property type="match status" value="1"/>
</dbReference>
<dbReference type="PANTHER" id="PTHR47679">
    <property type="entry name" value="PROTEIN TORNADO 1"/>
    <property type="match status" value="1"/>
</dbReference>
<dbReference type="Pfam" id="PF16095">
    <property type="entry name" value="COR-A"/>
    <property type="match status" value="1"/>
</dbReference>
<dbReference type="Pfam" id="PF25497">
    <property type="entry name" value="COR-B"/>
    <property type="match status" value="1"/>
</dbReference>
<dbReference type="Pfam" id="PF19964">
    <property type="entry name" value="EAD11"/>
    <property type="match status" value="1"/>
</dbReference>
<dbReference type="Pfam" id="PF08477">
    <property type="entry name" value="Roc"/>
    <property type="match status" value="1"/>
</dbReference>
<dbReference type="PRINTS" id="PR00449">
    <property type="entry name" value="RASTRNSFRMNG"/>
</dbReference>
<dbReference type="SMART" id="SM00369">
    <property type="entry name" value="LRR_TYP"/>
    <property type="match status" value="3"/>
</dbReference>
<dbReference type="SUPFAM" id="SSF52058">
    <property type="entry name" value="L domain-like"/>
    <property type="match status" value="1"/>
</dbReference>
<dbReference type="SUPFAM" id="SSF52540">
    <property type="entry name" value="P-loop containing nucleoside triphosphate hydrolases"/>
    <property type="match status" value="1"/>
</dbReference>
<dbReference type="PROSITE" id="PS51450">
    <property type="entry name" value="LRR"/>
    <property type="match status" value="6"/>
</dbReference>
<reference key="1">
    <citation type="submission" date="2019-01" db="EMBL/GenBank/DDBJ databases">
        <title>Saline water microbial communities from Organic Lake, Antarctica - #987.</title>
        <authorList>
            <consortium name="DOE Joint Genome Institute"/>
        </authorList>
    </citation>
    <scope>NUCLEOTIDE SEQUENCE [LARGE SCALE GENOMIC DNA]</scope>
</reference>
<reference key="2">
    <citation type="journal article" date="2022" name="Science">
        <title>Bacterial gasdermins reveal an ancient mechanism of cell death.</title>
        <authorList>
            <person name="Johnson A.G."/>
            <person name="Wein T."/>
            <person name="Mayer M.L."/>
            <person name="Duncan-Lowey B."/>
            <person name="Yirmiya E."/>
            <person name="Oppenheimer-Shaanan Y."/>
            <person name="Amitai G."/>
            <person name="Sorek R."/>
            <person name="Kranzusch P.J."/>
        </authorList>
    </citation>
    <scope>IDENTIFICATION</scope>
    <scope>FUNCTION</scope>
    <scope>BIOPHYSICOCHEMICAL PROPERTIES</scope>
</reference>
<gene>
    <name evidence="5" type="ORF">Ga0307981_100051430</name>
</gene>